<evidence type="ECO:0000250" key="1">
    <source>
        <dbReference type="UniProtKB" id="Q8IN41"/>
    </source>
</evidence>
<evidence type="ECO:0000255" key="2"/>
<evidence type="ECO:0000312" key="3">
    <source>
        <dbReference type="EMBL" id="EDW24701.1"/>
    </source>
</evidence>
<feature type="signal peptide" evidence="2">
    <location>
        <begin position="1"/>
        <end position="23"/>
    </location>
</feature>
<feature type="chain" id="PRO_0000355007" description="Protein Turandot Z">
    <location>
        <begin position="24"/>
        <end position="151"/>
    </location>
</feature>
<proteinExistence type="inferred from homology"/>
<sequence>MSRLIHLSFVLALLACLTGTISANPIDDDRDRLNQLLSNPEPADDAELLRNTQEAIALYKKHARRTLPGHQVELDLDRDIRAFETENLTVDGLPIQGGVWDLIKKGADKVPDEVKDQAKELAKTTAKALFNKLTEYLKKKISGEDAAKKDT</sequence>
<keyword id="KW-0391">Immunity</keyword>
<keyword id="KW-0399">Innate immunity</keyword>
<keyword id="KW-1185">Reference proteome</keyword>
<keyword id="KW-0964">Secreted</keyword>
<keyword id="KW-0732">Signal</keyword>
<accession>B4G535</accession>
<gene>
    <name evidence="3" type="primary">TotZ</name>
    <name type="ORF">GL23250</name>
</gene>
<name>TOTZ_DROPE</name>
<protein>
    <recommendedName>
        <fullName>Protein Turandot Z</fullName>
    </recommendedName>
</protein>
<dbReference type="EMBL" id="CH479179">
    <property type="protein sequence ID" value="EDW24701.1"/>
    <property type="molecule type" value="Genomic_DNA"/>
</dbReference>
<dbReference type="SMR" id="B4G535"/>
<dbReference type="EnsemblMetazoa" id="FBtr0188865">
    <property type="protein sequence ID" value="FBpp0187357"/>
    <property type="gene ID" value="FBgn0160840"/>
</dbReference>
<dbReference type="EnsemblMetazoa" id="XM_002013679.2">
    <property type="protein sequence ID" value="XP_002013715.1"/>
    <property type="gene ID" value="LOC6587897"/>
</dbReference>
<dbReference type="GeneID" id="6587897"/>
<dbReference type="KEGG" id="dpe:6587897"/>
<dbReference type="HOGENOM" id="CLU_1733395_0_0_1"/>
<dbReference type="OMA" id="PIQGGVW"/>
<dbReference type="OrthoDB" id="7843604at2759"/>
<dbReference type="PhylomeDB" id="B4G535"/>
<dbReference type="Proteomes" id="UP000008744">
    <property type="component" value="Unassembled WGS sequence"/>
</dbReference>
<dbReference type="GO" id="GO:0005615">
    <property type="term" value="C:extracellular space"/>
    <property type="evidence" value="ECO:0000250"/>
    <property type="project" value="UniProtKB"/>
</dbReference>
<dbReference type="GO" id="GO:0034605">
    <property type="term" value="P:cellular response to heat"/>
    <property type="evidence" value="ECO:0007669"/>
    <property type="project" value="UniProtKB-ARBA"/>
</dbReference>
<dbReference type="GO" id="GO:0045087">
    <property type="term" value="P:innate immune response"/>
    <property type="evidence" value="ECO:0007669"/>
    <property type="project" value="UniProtKB-KW"/>
</dbReference>
<dbReference type="GO" id="GO:0009617">
    <property type="term" value="P:response to bacterium"/>
    <property type="evidence" value="ECO:0007669"/>
    <property type="project" value="UniProtKB-ARBA"/>
</dbReference>
<dbReference type="GO" id="GO:0009408">
    <property type="term" value="P:response to heat"/>
    <property type="evidence" value="ECO:0000250"/>
    <property type="project" value="UniProtKB"/>
</dbReference>
<dbReference type="GO" id="GO:0006979">
    <property type="term" value="P:response to oxidative stress"/>
    <property type="evidence" value="ECO:0000250"/>
    <property type="project" value="UniProtKB"/>
</dbReference>
<dbReference type="GO" id="GO:0009411">
    <property type="term" value="P:response to UV"/>
    <property type="evidence" value="ECO:0000250"/>
    <property type="project" value="UniProtKB"/>
</dbReference>
<dbReference type="InterPro" id="IPR010825">
    <property type="entry name" value="Turandot"/>
</dbReference>
<dbReference type="Pfam" id="PF07240">
    <property type="entry name" value="Turandot"/>
    <property type="match status" value="1"/>
</dbReference>
<comment type="function">
    <text evidence="1">A humoral factor that may play a role in stress tolerance.</text>
</comment>
<comment type="subcellular location">
    <subcellularLocation>
        <location evidence="1">Secreted</location>
    </subcellularLocation>
</comment>
<comment type="similarity">
    <text evidence="2">Belongs to the Turandot family.</text>
</comment>
<organism>
    <name type="scientific">Drosophila persimilis</name>
    <name type="common">Fruit fly</name>
    <dbReference type="NCBI Taxonomy" id="7234"/>
    <lineage>
        <taxon>Eukaryota</taxon>
        <taxon>Metazoa</taxon>
        <taxon>Ecdysozoa</taxon>
        <taxon>Arthropoda</taxon>
        <taxon>Hexapoda</taxon>
        <taxon>Insecta</taxon>
        <taxon>Pterygota</taxon>
        <taxon>Neoptera</taxon>
        <taxon>Endopterygota</taxon>
        <taxon>Diptera</taxon>
        <taxon>Brachycera</taxon>
        <taxon>Muscomorpha</taxon>
        <taxon>Ephydroidea</taxon>
        <taxon>Drosophilidae</taxon>
        <taxon>Drosophila</taxon>
        <taxon>Sophophora</taxon>
    </lineage>
</organism>
<reference evidence="3" key="1">
    <citation type="journal article" date="2007" name="Nature">
        <title>Evolution of genes and genomes on the Drosophila phylogeny.</title>
        <authorList>
            <consortium name="Drosophila 12 genomes consortium"/>
        </authorList>
    </citation>
    <scope>NUCLEOTIDE SEQUENCE [LARGE SCALE GENOMIC DNA]</scope>
    <source>
        <strain>MSH-3 / Tucson 14011-0111.49</strain>
    </source>
</reference>